<proteinExistence type="inferred from homology"/>
<organism>
    <name type="scientific">Methanoregula boonei (strain DSM 21154 / JCM 14090 / 6A8)</name>
    <dbReference type="NCBI Taxonomy" id="456442"/>
    <lineage>
        <taxon>Archaea</taxon>
        <taxon>Methanobacteriati</taxon>
        <taxon>Methanobacteriota</taxon>
        <taxon>Stenosarchaea group</taxon>
        <taxon>Methanomicrobia</taxon>
        <taxon>Methanomicrobiales</taxon>
        <taxon>Methanoregulaceae</taxon>
        <taxon>Methanoregula</taxon>
    </lineage>
</organism>
<comment type="function">
    <text evidence="1">Catalyzes the methyl esterification of L-isoaspartyl residues in peptides and proteins that result from spontaneous decomposition of normal L-aspartyl and L-asparaginyl residues. It plays a role in the repair and/or degradation of damaged proteins.</text>
</comment>
<comment type="catalytic activity">
    <reaction evidence="1">
        <text>[protein]-L-isoaspartate + S-adenosyl-L-methionine = [protein]-L-isoaspartate alpha-methyl ester + S-adenosyl-L-homocysteine</text>
        <dbReference type="Rhea" id="RHEA:12705"/>
        <dbReference type="Rhea" id="RHEA-COMP:12143"/>
        <dbReference type="Rhea" id="RHEA-COMP:12144"/>
        <dbReference type="ChEBI" id="CHEBI:57856"/>
        <dbReference type="ChEBI" id="CHEBI:59789"/>
        <dbReference type="ChEBI" id="CHEBI:90596"/>
        <dbReference type="ChEBI" id="CHEBI:90598"/>
        <dbReference type="EC" id="2.1.1.77"/>
    </reaction>
</comment>
<comment type="subcellular location">
    <subcellularLocation>
        <location evidence="1">Cytoplasm</location>
    </subcellularLocation>
</comment>
<comment type="similarity">
    <text evidence="1">Belongs to the methyltransferase superfamily. L-isoaspartyl/D-aspartyl protein methyltransferase family.</text>
</comment>
<protein>
    <recommendedName>
        <fullName evidence="1">Protein-L-isoaspartate O-methyltransferase</fullName>
        <ecNumber evidence="1">2.1.1.77</ecNumber>
    </recommendedName>
    <alternativeName>
        <fullName evidence="1">L-isoaspartyl protein carboxyl methyltransferase</fullName>
    </alternativeName>
    <alternativeName>
        <fullName evidence="1">Protein L-isoaspartyl methyltransferase</fullName>
    </alternativeName>
    <alternativeName>
        <fullName evidence="1">Protein-beta-aspartate methyltransferase</fullName>
        <shortName evidence="1">PIMT</shortName>
    </alternativeName>
</protein>
<reference key="1">
    <citation type="journal article" date="2015" name="Microbiology">
        <title>Genome of Methanoregula boonei 6A8 reveals adaptations to oligotrophic peatland environments.</title>
        <authorList>
            <person name="Braeuer S."/>
            <person name="Cadillo-Quiroz H."/>
            <person name="Kyrpides N."/>
            <person name="Woyke T."/>
            <person name="Goodwin L."/>
            <person name="Detter C."/>
            <person name="Podell S."/>
            <person name="Yavitt J.B."/>
            <person name="Zinder S.H."/>
        </authorList>
    </citation>
    <scope>NUCLEOTIDE SEQUENCE [LARGE SCALE GENOMIC DNA]</scope>
    <source>
        <strain>DSM 21154 / JCM 14090 / 6A8</strain>
    </source>
</reference>
<accession>A7I4W9</accession>
<name>PIMT_METB6</name>
<feature type="chain" id="PRO_0000351970" description="Protein-L-isoaspartate O-methyltransferase">
    <location>
        <begin position="1"/>
        <end position="217"/>
    </location>
</feature>
<feature type="active site" evidence="1">
    <location>
        <position position="65"/>
    </location>
</feature>
<gene>
    <name evidence="1" type="primary">pcm</name>
    <name type="ordered locus">Mboo_0258</name>
</gene>
<dbReference type="EC" id="2.1.1.77" evidence="1"/>
<dbReference type="EMBL" id="CP000780">
    <property type="protein sequence ID" value="ABS54780.1"/>
    <property type="molecule type" value="Genomic_DNA"/>
</dbReference>
<dbReference type="RefSeq" id="WP_011991268.1">
    <property type="nucleotide sequence ID" value="NC_009712.1"/>
</dbReference>
<dbReference type="SMR" id="A7I4W9"/>
<dbReference type="STRING" id="456442.Mboo_0258"/>
<dbReference type="GeneID" id="5410248"/>
<dbReference type="KEGG" id="mbn:Mboo_0258"/>
<dbReference type="eggNOG" id="arCOG00976">
    <property type="taxonomic scope" value="Archaea"/>
</dbReference>
<dbReference type="HOGENOM" id="CLU_055432_2_0_2"/>
<dbReference type="OrthoDB" id="33618at2157"/>
<dbReference type="Proteomes" id="UP000002408">
    <property type="component" value="Chromosome"/>
</dbReference>
<dbReference type="GO" id="GO:0005737">
    <property type="term" value="C:cytoplasm"/>
    <property type="evidence" value="ECO:0007669"/>
    <property type="project" value="UniProtKB-SubCell"/>
</dbReference>
<dbReference type="GO" id="GO:0004719">
    <property type="term" value="F:protein-L-isoaspartate (D-aspartate) O-methyltransferase activity"/>
    <property type="evidence" value="ECO:0007669"/>
    <property type="project" value="UniProtKB-UniRule"/>
</dbReference>
<dbReference type="GO" id="GO:0032259">
    <property type="term" value="P:methylation"/>
    <property type="evidence" value="ECO:0007669"/>
    <property type="project" value="UniProtKB-KW"/>
</dbReference>
<dbReference type="GO" id="GO:0036211">
    <property type="term" value="P:protein modification process"/>
    <property type="evidence" value="ECO:0007669"/>
    <property type="project" value="UniProtKB-UniRule"/>
</dbReference>
<dbReference type="GO" id="GO:0030091">
    <property type="term" value="P:protein repair"/>
    <property type="evidence" value="ECO:0007669"/>
    <property type="project" value="UniProtKB-UniRule"/>
</dbReference>
<dbReference type="CDD" id="cd02440">
    <property type="entry name" value="AdoMet_MTases"/>
    <property type="match status" value="1"/>
</dbReference>
<dbReference type="FunFam" id="3.40.50.150:FF:000010">
    <property type="entry name" value="Protein-L-isoaspartate O-methyltransferase"/>
    <property type="match status" value="1"/>
</dbReference>
<dbReference type="Gene3D" id="3.40.50.150">
    <property type="entry name" value="Vaccinia Virus protein VP39"/>
    <property type="match status" value="1"/>
</dbReference>
<dbReference type="HAMAP" id="MF_00090">
    <property type="entry name" value="PIMT"/>
    <property type="match status" value="1"/>
</dbReference>
<dbReference type="InterPro" id="IPR000682">
    <property type="entry name" value="PCMT"/>
</dbReference>
<dbReference type="InterPro" id="IPR029063">
    <property type="entry name" value="SAM-dependent_MTases_sf"/>
</dbReference>
<dbReference type="NCBIfam" id="TIGR00080">
    <property type="entry name" value="pimt"/>
    <property type="match status" value="1"/>
</dbReference>
<dbReference type="NCBIfam" id="NF001453">
    <property type="entry name" value="PRK00312.1"/>
    <property type="match status" value="1"/>
</dbReference>
<dbReference type="PANTHER" id="PTHR11579">
    <property type="entry name" value="PROTEIN-L-ISOASPARTATE O-METHYLTRANSFERASE"/>
    <property type="match status" value="1"/>
</dbReference>
<dbReference type="PANTHER" id="PTHR11579:SF0">
    <property type="entry name" value="PROTEIN-L-ISOASPARTATE(D-ASPARTATE) O-METHYLTRANSFERASE"/>
    <property type="match status" value="1"/>
</dbReference>
<dbReference type="Pfam" id="PF01135">
    <property type="entry name" value="PCMT"/>
    <property type="match status" value="1"/>
</dbReference>
<dbReference type="SUPFAM" id="SSF53335">
    <property type="entry name" value="S-adenosyl-L-methionine-dependent methyltransferases"/>
    <property type="match status" value="1"/>
</dbReference>
<dbReference type="PROSITE" id="PS01279">
    <property type="entry name" value="PCMT"/>
    <property type="match status" value="1"/>
</dbReference>
<sequence length="217" mass="23640">MTTPYPRSDERRRMVDLQIAGRGIRDPRVLAAMAEVPRHLFIPPPYDRDAYADTPLPIGNDQTISQPYIVALMTELLHPCPEDRVLEIGAGSGYQAAILARLAAKVVTIERLGAVAAQARANLAAVGAENVEVIEGDGTFGYPLSAPYDGILVTAASPEIPQPLTEQLADKGRLVVPVGGRAMQDIVVLERDGSRYREERIEGVRFVPLIGKYGWEN</sequence>
<keyword id="KW-0963">Cytoplasm</keyword>
<keyword id="KW-0489">Methyltransferase</keyword>
<keyword id="KW-1185">Reference proteome</keyword>
<keyword id="KW-0949">S-adenosyl-L-methionine</keyword>
<keyword id="KW-0808">Transferase</keyword>
<evidence type="ECO:0000255" key="1">
    <source>
        <dbReference type="HAMAP-Rule" id="MF_00090"/>
    </source>
</evidence>